<organism>
    <name type="scientific">Streptococcus thermophilus (strain ATCC BAA-250 / LMG 18311)</name>
    <dbReference type="NCBI Taxonomy" id="264199"/>
    <lineage>
        <taxon>Bacteria</taxon>
        <taxon>Bacillati</taxon>
        <taxon>Bacillota</taxon>
        <taxon>Bacilli</taxon>
        <taxon>Lactobacillales</taxon>
        <taxon>Streptococcaceae</taxon>
        <taxon>Streptococcus</taxon>
    </lineage>
</organism>
<gene>
    <name type="ordered locus">stu0232</name>
</gene>
<accession>Q5M647</accession>
<comment type="similarity">
    <text evidence="1">Belongs to the UPF0398 family.</text>
</comment>
<dbReference type="EMBL" id="CP000023">
    <property type="protein sequence ID" value="AAV59957.1"/>
    <property type="molecule type" value="Genomic_DNA"/>
</dbReference>
<dbReference type="RefSeq" id="WP_011225419.1">
    <property type="nucleotide sequence ID" value="NC_006448.1"/>
</dbReference>
<dbReference type="SMR" id="Q5M647"/>
<dbReference type="STRING" id="264199.stu0232"/>
<dbReference type="KEGG" id="stl:stu0232"/>
<dbReference type="PATRIC" id="fig|264199.4.peg.238"/>
<dbReference type="eggNOG" id="COG4474">
    <property type="taxonomic scope" value="Bacteria"/>
</dbReference>
<dbReference type="HOGENOM" id="CLU_105319_0_0_9"/>
<dbReference type="Proteomes" id="UP000001170">
    <property type="component" value="Chromosome"/>
</dbReference>
<dbReference type="Gene3D" id="3.40.50.450">
    <property type="match status" value="1"/>
</dbReference>
<dbReference type="HAMAP" id="MF_01575">
    <property type="entry name" value="UPF0398"/>
    <property type="match status" value="1"/>
</dbReference>
<dbReference type="InterPro" id="IPR010697">
    <property type="entry name" value="YspA"/>
</dbReference>
<dbReference type="NCBIfam" id="NF010181">
    <property type="entry name" value="PRK13660.1"/>
    <property type="match status" value="1"/>
</dbReference>
<dbReference type="PANTHER" id="PTHR38440:SF1">
    <property type="entry name" value="UPF0398 PROTEIN SPR0331"/>
    <property type="match status" value="1"/>
</dbReference>
<dbReference type="PANTHER" id="PTHR38440">
    <property type="entry name" value="UPF0398 PROTEIN YPSA"/>
    <property type="match status" value="1"/>
</dbReference>
<dbReference type="Pfam" id="PF06908">
    <property type="entry name" value="YpsA"/>
    <property type="match status" value="1"/>
</dbReference>
<dbReference type="PIRSF" id="PIRSF021290">
    <property type="entry name" value="DUF1273"/>
    <property type="match status" value="1"/>
</dbReference>
<dbReference type="SUPFAM" id="SSF102405">
    <property type="entry name" value="MCP/YpsA-like"/>
    <property type="match status" value="1"/>
</dbReference>
<protein>
    <recommendedName>
        <fullName evidence="1">UPF0398 protein stu0232</fullName>
    </recommendedName>
</protein>
<feature type="chain" id="PRO_0000267196" description="UPF0398 protein stu0232">
    <location>
        <begin position="1"/>
        <end position="171"/>
    </location>
</feature>
<evidence type="ECO:0000255" key="1">
    <source>
        <dbReference type="HAMAP-Rule" id="MF_01575"/>
    </source>
</evidence>
<proteinExistence type="inferred from homology"/>
<name>Y232_STRT2</name>
<keyword id="KW-1185">Reference proteome</keyword>
<reference key="1">
    <citation type="journal article" date="2004" name="Nat. Biotechnol.">
        <title>Complete sequence and comparative genome analysis of the dairy bacterium Streptococcus thermophilus.</title>
        <authorList>
            <person name="Bolotin A."/>
            <person name="Quinquis B."/>
            <person name="Renault P."/>
            <person name="Sorokin A."/>
            <person name="Ehrlich S.D."/>
            <person name="Kulakauskas S."/>
            <person name="Lapidus A."/>
            <person name="Goltsman E."/>
            <person name="Mazur M."/>
            <person name="Pusch G.D."/>
            <person name="Fonstein M."/>
            <person name="Overbeek R."/>
            <person name="Kyprides N."/>
            <person name="Purnelle B."/>
            <person name="Prozzi D."/>
            <person name="Ngui K."/>
            <person name="Masuy D."/>
            <person name="Hancy F."/>
            <person name="Burteau S."/>
            <person name="Boutry M."/>
            <person name="Delcour J."/>
            <person name="Goffeau A."/>
            <person name="Hols P."/>
        </authorList>
    </citation>
    <scope>NUCLEOTIDE SEQUENCE [LARGE SCALE GENOMIC DNA]</scope>
    <source>
        <strain>ATCC BAA-250 / LMG 18311</strain>
    </source>
</reference>
<sequence length="171" mass="20186">MTSLLITGYKSFELGVFKDKDPKVNIIKKAIKRDLKRFLDEGVDWMIFTGNLGFEFWALEVAKELQKDYPLRLATLFPFKTHGQNWSEANQEKLAAFKQVDFVKYSFPAYQSPAQFKQFNQFLIDNTDQAYLFYEPENETNLKYFYNMIIAASDYPLFRLTFDDLNEVMSE</sequence>